<sequence length="430" mass="46814">MGKNVVVLGTQWGDEGKGKIVDLLTEQAAAVVRYQGGHNAGHTLVIDGEKTVLHLIPSGILREGVQCLIGNGVVLAPDALLREITKLEEKGVPVRERLRISPSCPLILSYHVALDQAREKARGEAKIGTTGRGIGPAYEDKVARRGLRVGDLFHRERFAAKLGELLDYHNFVLQHYYKEPAIDFQKTLDEAMEYAELLKPMMADVAATLHDLRKHGKDIMFEGAQGSLLDIDHGTYPYVTSSNTTAGGTATGSGFGPLYLDYVLGITKAYTTRVGSGPFPTELFDDVGAYLAKRGHEFGATTGRARRCGWFDAVILRRAIEINSISGLCLTKLDVLDGLDVVRLCVGYKNADGDVLEAPTDADSYIGLQPVYEEMPGWSESTVGAKTLEELPANARAYIKRVEELVGAPIDIISTGPDRNETIILRHPFA</sequence>
<reference key="1">
    <citation type="journal article" date="2009" name="Genome Res.">
        <title>Newly introduced genomic prophage islands are critical determinants of in vivo competitiveness in the Liverpool epidemic strain of Pseudomonas aeruginosa.</title>
        <authorList>
            <person name="Winstanley C."/>
            <person name="Langille M.G.I."/>
            <person name="Fothergill J.L."/>
            <person name="Kukavica-Ibrulj I."/>
            <person name="Paradis-Bleau C."/>
            <person name="Sanschagrin F."/>
            <person name="Thomson N.R."/>
            <person name="Winsor G.L."/>
            <person name="Quail M.A."/>
            <person name="Lennard N."/>
            <person name="Bignell A."/>
            <person name="Clarke L."/>
            <person name="Seeger K."/>
            <person name="Saunders D."/>
            <person name="Harris D."/>
            <person name="Parkhill J."/>
            <person name="Hancock R.E.W."/>
            <person name="Brinkman F.S.L."/>
            <person name="Levesque R.C."/>
        </authorList>
    </citation>
    <scope>NUCLEOTIDE SEQUENCE [LARGE SCALE GENOMIC DNA]</scope>
    <source>
        <strain>LESB58</strain>
    </source>
</reference>
<dbReference type="EC" id="6.3.4.4" evidence="1"/>
<dbReference type="EMBL" id="FM209186">
    <property type="protein sequence ID" value="CAW30078.1"/>
    <property type="molecule type" value="Genomic_DNA"/>
</dbReference>
<dbReference type="RefSeq" id="WP_003095642.1">
    <property type="nucleotide sequence ID" value="NC_011770.1"/>
</dbReference>
<dbReference type="SMR" id="B7V201"/>
<dbReference type="KEGG" id="pag:PLES_53241"/>
<dbReference type="HOGENOM" id="CLU_029848_0_0_6"/>
<dbReference type="UniPathway" id="UPA00075">
    <property type="reaction ID" value="UER00335"/>
</dbReference>
<dbReference type="GO" id="GO:0005737">
    <property type="term" value="C:cytoplasm"/>
    <property type="evidence" value="ECO:0007669"/>
    <property type="project" value="UniProtKB-SubCell"/>
</dbReference>
<dbReference type="GO" id="GO:0004019">
    <property type="term" value="F:adenylosuccinate synthase activity"/>
    <property type="evidence" value="ECO:0007669"/>
    <property type="project" value="UniProtKB-UniRule"/>
</dbReference>
<dbReference type="GO" id="GO:0005525">
    <property type="term" value="F:GTP binding"/>
    <property type="evidence" value="ECO:0007669"/>
    <property type="project" value="UniProtKB-UniRule"/>
</dbReference>
<dbReference type="GO" id="GO:0000287">
    <property type="term" value="F:magnesium ion binding"/>
    <property type="evidence" value="ECO:0007669"/>
    <property type="project" value="UniProtKB-UniRule"/>
</dbReference>
<dbReference type="GO" id="GO:0044208">
    <property type="term" value="P:'de novo' AMP biosynthetic process"/>
    <property type="evidence" value="ECO:0007669"/>
    <property type="project" value="UniProtKB-UniRule"/>
</dbReference>
<dbReference type="GO" id="GO:0046040">
    <property type="term" value="P:IMP metabolic process"/>
    <property type="evidence" value="ECO:0007669"/>
    <property type="project" value="TreeGrafter"/>
</dbReference>
<dbReference type="CDD" id="cd03108">
    <property type="entry name" value="AdSS"/>
    <property type="match status" value="1"/>
</dbReference>
<dbReference type="FunFam" id="1.10.300.10:FF:000001">
    <property type="entry name" value="Adenylosuccinate synthetase"/>
    <property type="match status" value="1"/>
</dbReference>
<dbReference type="FunFam" id="3.90.170.10:FF:000001">
    <property type="entry name" value="Adenylosuccinate synthetase"/>
    <property type="match status" value="1"/>
</dbReference>
<dbReference type="Gene3D" id="3.40.440.10">
    <property type="entry name" value="Adenylosuccinate Synthetase, subunit A, domain 1"/>
    <property type="match status" value="1"/>
</dbReference>
<dbReference type="Gene3D" id="1.10.300.10">
    <property type="entry name" value="Adenylosuccinate Synthetase, subunit A, domain 2"/>
    <property type="match status" value="1"/>
</dbReference>
<dbReference type="Gene3D" id="3.90.170.10">
    <property type="entry name" value="Adenylosuccinate Synthetase, subunit A, domain 3"/>
    <property type="match status" value="1"/>
</dbReference>
<dbReference type="HAMAP" id="MF_00011">
    <property type="entry name" value="Adenylosucc_synth"/>
    <property type="match status" value="1"/>
</dbReference>
<dbReference type="InterPro" id="IPR018220">
    <property type="entry name" value="Adenylosuccin_syn_GTP-bd"/>
</dbReference>
<dbReference type="InterPro" id="IPR033128">
    <property type="entry name" value="Adenylosuccin_syn_Lys_AS"/>
</dbReference>
<dbReference type="InterPro" id="IPR042109">
    <property type="entry name" value="Adenylosuccinate_synth_dom1"/>
</dbReference>
<dbReference type="InterPro" id="IPR042110">
    <property type="entry name" value="Adenylosuccinate_synth_dom2"/>
</dbReference>
<dbReference type="InterPro" id="IPR042111">
    <property type="entry name" value="Adenylosuccinate_synth_dom3"/>
</dbReference>
<dbReference type="InterPro" id="IPR001114">
    <property type="entry name" value="Adenylosuccinate_synthetase"/>
</dbReference>
<dbReference type="InterPro" id="IPR027417">
    <property type="entry name" value="P-loop_NTPase"/>
</dbReference>
<dbReference type="NCBIfam" id="NF002223">
    <property type="entry name" value="PRK01117.1"/>
    <property type="match status" value="1"/>
</dbReference>
<dbReference type="NCBIfam" id="TIGR00184">
    <property type="entry name" value="purA"/>
    <property type="match status" value="1"/>
</dbReference>
<dbReference type="PANTHER" id="PTHR11846">
    <property type="entry name" value="ADENYLOSUCCINATE SYNTHETASE"/>
    <property type="match status" value="1"/>
</dbReference>
<dbReference type="PANTHER" id="PTHR11846:SF0">
    <property type="entry name" value="ADENYLOSUCCINATE SYNTHETASE"/>
    <property type="match status" value="1"/>
</dbReference>
<dbReference type="Pfam" id="PF00709">
    <property type="entry name" value="Adenylsucc_synt"/>
    <property type="match status" value="1"/>
</dbReference>
<dbReference type="SMART" id="SM00788">
    <property type="entry name" value="Adenylsucc_synt"/>
    <property type="match status" value="1"/>
</dbReference>
<dbReference type="SUPFAM" id="SSF52540">
    <property type="entry name" value="P-loop containing nucleoside triphosphate hydrolases"/>
    <property type="match status" value="1"/>
</dbReference>
<dbReference type="PROSITE" id="PS01266">
    <property type="entry name" value="ADENYLOSUCCIN_SYN_1"/>
    <property type="match status" value="1"/>
</dbReference>
<dbReference type="PROSITE" id="PS00513">
    <property type="entry name" value="ADENYLOSUCCIN_SYN_2"/>
    <property type="match status" value="1"/>
</dbReference>
<keyword id="KW-0963">Cytoplasm</keyword>
<keyword id="KW-0342">GTP-binding</keyword>
<keyword id="KW-0436">Ligase</keyword>
<keyword id="KW-0460">Magnesium</keyword>
<keyword id="KW-0479">Metal-binding</keyword>
<keyword id="KW-0547">Nucleotide-binding</keyword>
<keyword id="KW-0658">Purine biosynthesis</keyword>
<comment type="function">
    <text evidence="1">Plays an important role in the de novo pathway of purine nucleotide biosynthesis. Catalyzes the first committed step in the biosynthesis of AMP from IMP.</text>
</comment>
<comment type="catalytic activity">
    <reaction evidence="1">
        <text>IMP + L-aspartate + GTP = N(6)-(1,2-dicarboxyethyl)-AMP + GDP + phosphate + 2 H(+)</text>
        <dbReference type="Rhea" id="RHEA:15753"/>
        <dbReference type="ChEBI" id="CHEBI:15378"/>
        <dbReference type="ChEBI" id="CHEBI:29991"/>
        <dbReference type="ChEBI" id="CHEBI:37565"/>
        <dbReference type="ChEBI" id="CHEBI:43474"/>
        <dbReference type="ChEBI" id="CHEBI:57567"/>
        <dbReference type="ChEBI" id="CHEBI:58053"/>
        <dbReference type="ChEBI" id="CHEBI:58189"/>
        <dbReference type="EC" id="6.3.4.4"/>
    </reaction>
</comment>
<comment type="cofactor">
    <cofactor evidence="1">
        <name>Mg(2+)</name>
        <dbReference type="ChEBI" id="CHEBI:18420"/>
    </cofactor>
    <text evidence="1">Binds 1 Mg(2+) ion per subunit.</text>
</comment>
<comment type="pathway">
    <text evidence="1">Purine metabolism; AMP biosynthesis via de novo pathway; AMP from IMP: step 1/2.</text>
</comment>
<comment type="subunit">
    <text evidence="1">Homodimer.</text>
</comment>
<comment type="subcellular location">
    <subcellularLocation>
        <location evidence="1">Cytoplasm</location>
    </subcellularLocation>
</comment>
<comment type="similarity">
    <text evidence="1">Belongs to the adenylosuccinate synthetase family.</text>
</comment>
<gene>
    <name evidence="1" type="primary">purA</name>
    <name type="ordered locus">PLES_53241</name>
</gene>
<accession>B7V201</accession>
<name>PURA_PSEA8</name>
<feature type="chain" id="PRO_1000194770" description="Adenylosuccinate synthetase">
    <location>
        <begin position="1"/>
        <end position="430"/>
    </location>
</feature>
<feature type="active site" description="Proton acceptor" evidence="1">
    <location>
        <position position="14"/>
    </location>
</feature>
<feature type="active site" description="Proton donor" evidence="1">
    <location>
        <position position="42"/>
    </location>
</feature>
<feature type="binding site" evidence="1">
    <location>
        <begin position="13"/>
        <end position="19"/>
    </location>
    <ligand>
        <name>GTP</name>
        <dbReference type="ChEBI" id="CHEBI:37565"/>
    </ligand>
</feature>
<feature type="binding site" description="in other chain" evidence="1">
    <location>
        <begin position="14"/>
        <end position="17"/>
    </location>
    <ligand>
        <name>IMP</name>
        <dbReference type="ChEBI" id="CHEBI:58053"/>
        <note>ligand shared between dimeric partners</note>
    </ligand>
</feature>
<feature type="binding site" evidence="1">
    <location>
        <position position="14"/>
    </location>
    <ligand>
        <name>Mg(2+)</name>
        <dbReference type="ChEBI" id="CHEBI:18420"/>
    </ligand>
</feature>
<feature type="binding site" description="in other chain" evidence="1">
    <location>
        <begin position="39"/>
        <end position="42"/>
    </location>
    <ligand>
        <name>IMP</name>
        <dbReference type="ChEBI" id="CHEBI:58053"/>
        <note>ligand shared between dimeric partners</note>
    </ligand>
</feature>
<feature type="binding site" evidence="1">
    <location>
        <begin position="41"/>
        <end position="43"/>
    </location>
    <ligand>
        <name>GTP</name>
        <dbReference type="ChEBI" id="CHEBI:37565"/>
    </ligand>
</feature>
<feature type="binding site" evidence="1">
    <location>
        <position position="41"/>
    </location>
    <ligand>
        <name>Mg(2+)</name>
        <dbReference type="ChEBI" id="CHEBI:18420"/>
    </ligand>
</feature>
<feature type="binding site" description="in other chain" evidence="1">
    <location>
        <position position="130"/>
    </location>
    <ligand>
        <name>IMP</name>
        <dbReference type="ChEBI" id="CHEBI:58053"/>
        <note>ligand shared between dimeric partners</note>
    </ligand>
</feature>
<feature type="binding site" evidence="1">
    <location>
        <position position="144"/>
    </location>
    <ligand>
        <name>IMP</name>
        <dbReference type="ChEBI" id="CHEBI:58053"/>
        <note>ligand shared between dimeric partners</note>
    </ligand>
</feature>
<feature type="binding site" description="in other chain" evidence="1">
    <location>
        <position position="225"/>
    </location>
    <ligand>
        <name>IMP</name>
        <dbReference type="ChEBI" id="CHEBI:58053"/>
        <note>ligand shared between dimeric partners</note>
    </ligand>
</feature>
<feature type="binding site" description="in other chain" evidence="1">
    <location>
        <position position="240"/>
    </location>
    <ligand>
        <name>IMP</name>
        <dbReference type="ChEBI" id="CHEBI:58053"/>
        <note>ligand shared between dimeric partners</note>
    </ligand>
</feature>
<feature type="binding site" evidence="1">
    <location>
        <begin position="300"/>
        <end position="306"/>
    </location>
    <ligand>
        <name>substrate</name>
    </ligand>
</feature>
<feature type="binding site" description="in other chain" evidence="1">
    <location>
        <position position="304"/>
    </location>
    <ligand>
        <name>IMP</name>
        <dbReference type="ChEBI" id="CHEBI:58053"/>
        <note>ligand shared between dimeric partners</note>
    </ligand>
</feature>
<feature type="binding site" evidence="1">
    <location>
        <position position="306"/>
    </location>
    <ligand>
        <name>GTP</name>
        <dbReference type="ChEBI" id="CHEBI:37565"/>
    </ligand>
</feature>
<feature type="binding site" evidence="1">
    <location>
        <begin position="332"/>
        <end position="334"/>
    </location>
    <ligand>
        <name>GTP</name>
        <dbReference type="ChEBI" id="CHEBI:37565"/>
    </ligand>
</feature>
<feature type="binding site" evidence="1">
    <location>
        <begin position="414"/>
        <end position="416"/>
    </location>
    <ligand>
        <name>GTP</name>
        <dbReference type="ChEBI" id="CHEBI:37565"/>
    </ligand>
</feature>
<proteinExistence type="inferred from homology"/>
<protein>
    <recommendedName>
        <fullName evidence="1">Adenylosuccinate synthetase</fullName>
        <shortName evidence="1">AMPSase</shortName>
        <shortName evidence="1">AdSS</shortName>
        <ecNumber evidence="1">6.3.4.4</ecNumber>
    </recommendedName>
    <alternativeName>
        <fullName evidence="1">IMP--aspartate ligase</fullName>
    </alternativeName>
</protein>
<evidence type="ECO:0000255" key="1">
    <source>
        <dbReference type="HAMAP-Rule" id="MF_00011"/>
    </source>
</evidence>
<organism>
    <name type="scientific">Pseudomonas aeruginosa (strain LESB58)</name>
    <dbReference type="NCBI Taxonomy" id="557722"/>
    <lineage>
        <taxon>Bacteria</taxon>
        <taxon>Pseudomonadati</taxon>
        <taxon>Pseudomonadota</taxon>
        <taxon>Gammaproteobacteria</taxon>
        <taxon>Pseudomonadales</taxon>
        <taxon>Pseudomonadaceae</taxon>
        <taxon>Pseudomonas</taxon>
    </lineage>
</organism>